<name>ENO_XANE5</name>
<sequence length="430" mass="45959">MTTIAKILAREILDSRGNPTLEAEVTLDDGSFGRAAVPSGASTGTKEAVELRDGDKTRYLGKGVRHAVDNVNGTIAETLKNFDAADQQGLDRRLIDLDGTENKGRLGANALLGVSLAAAHAVAASRKQPLWQYLSTITESDVALPVPMMNIINGGAHADNNVDFQEFMVLPVGCSSFSEALRAGTEIFHSLKSVLKGHGLSTAVGDEGGFAPDFRSNVEALDTILEAIGKAGYTAGEDILLGLDVASSEFYDNGKYNLVGENKRLTSEQFVDFLADWVAQYPIISIEDGLAEDDWAGWKLLTERVGKKVQLVGDDLFVTNPKIFKQGIDSGTANAILIKVNQIGTLTETLEAIAMAHAAHYASIVSHRSGETEDTTIADIAVATTATQIKTGSLCRSDRVAKYNQLLRIEQALGSGARYAGRDAFVSLKR</sequence>
<feature type="chain" id="PRO_0000267136" description="Enolase">
    <location>
        <begin position="1"/>
        <end position="430"/>
    </location>
</feature>
<feature type="active site" description="Proton donor" evidence="1">
    <location>
        <position position="207"/>
    </location>
</feature>
<feature type="active site" description="Proton acceptor" evidence="1">
    <location>
        <position position="339"/>
    </location>
</feature>
<feature type="binding site" evidence="1">
    <location>
        <position position="165"/>
    </location>
    <ligand>
        <name>(2R)-2-phosphoglycerate</name>
        <dbReference type="ChEBI" id="CHEBI:58289"/>
    </ligand>
</feature>
<feature type="binding site" evidence="1">
    <location>
        <position position="244"/>
    </location>
    <ligand>
        <name>Mg(2+)</name>
        <dbReference type="ChEBI" id="CHEBI:18420"/>
    </ligand>
</feature>
<feature type="binding site" evidence="1">
    <location>
        <position position="287"/>
    </location>
    <ligand>
        <name>Mg(2+)</name>
        <dbReference type="ChEBI" id="CHEBI:18420"/>
    </ligand>
</feature>
<feature type="binding site" evidence="1">
    <location>
        <position position="314"/>
    </location>
    <ligand>
        <name>Mg(2+)</name>
        <dbReference type="ChEBI" id="CHEBI:18420"/>
    </ligand>
</feature>
<feature type="binding site" evidence="1">
    <location>
        <position position="339"/>
    </location>
    <ligand>
        <name>(2R)-2-phosphoglycerate</name>
        <dbReference type="ChEBI" id="CHEBI:58289"/>
    </ligand>
</feature>
<feature type="binding site" evidence="1">
    <location>
        <position position="368"/>
    </location>
    <ligand>
        <name>(2R)-2-phosphoglycerate</name>
        <dbReference type="ChEBI" id="CHEBI:58289"/>
    </ligand>
</feature>
<feature type="binding site" evidence="1">
    <location>
        <position position="369"/>
    </location>
    <ligand>
        <name>(2R)-2-phosphoglycerate</name>
        <dbReference type="ChEBI" id="CHEBI:58289"/>
    </ligand>
</feature>
<feature type="binding site" evidence="1">
    <location>
        <position position="390"/>
    </location>
    <ligand>
        <name>(2R)-2-phosphoglycerate</name>
        <dbReference type="ChEBI" id="CHEBI:58289"/>
    </ligand>
</feature>
<evidence type="ECO:0000255" key="1">
    <source>
        <dbReference type="HAMAP-Rule" id="MF_00318"/>
    </source>
</evidence>
<accession>Q3BUT0</accession>
<reference key="1">
    <citation type="journal article" date="2005" name="J. Bacteriol.">
        <title>Insights into genome plasticity and pathogenicity of the plant pathogenic Bacterium Xanthomonas campestris pv. vesicatoria revealed by the complete genome sequence.</title>
        <authorList>
            <person name="Thieme F."/>
            <person name="Koebnik R."/>
            <person name="Bekel T."/>
            <person name="Berger C."/>
            <person name="Boch J."/>
            <person name="Buettner D."/>
            <person name="Caldana C."/>
            <person name="Gaigalat L."/>
            <person name="Goesmann A."/>
            <person name="Kay S."/>
            <person name="Kirchner O."/>
            <person name="Lanz C."/>
            <person name="Linke B."/>
            <person name="McHardy A.C."/>
            <person name="Meyer F."/>
            <person name="Mittenhuber G."/>
            <person name="Nies D.H."/>
            <person name="Niesbach-Kloesgen U."/>
            <person name="Patschkowski T."/>
            <person name="Rueckert C."/>
            <person name="Rupp O."/>
            <person name="Schneiker S."/>
            <person name="Schuster S.C."/>
            <person name="Vorhoelter F.J."/>
            <person name="Weber E."/>
            <person name="Puehler A."/>
            <person name="Bonas U."/>
            <person name="Bartels D."/>
            <person name="Kaiser O."/>
        </authorList>
    </citation>
    <scope>NUCLEOTIDE SEQUENCE [LARGE SCALE GENOMIC DNA]</scope>
    <source>
        <strain>85-10</strain>
    </source>
</reference>
<dbReference type="EC" id="4.2.1.11" evidence="1"/>
<dbReference type="EMBL" id="AM039952">
    <property type="protein sequence ID" value="CAJ23429.1"/>
    <property type="molecule type" value="Genomic_DNA"/>
</dbReference>
<dbReference type="RefSeq" id="WP_011347100.1">
    <property type="nucleotide sequence ID" value="NZ_CP017190.1"/>
</dbReference>
<dbReference type="SMR" id="Q3BUT0"/>
<dbReference type="STRING" id="456327.BJD11_13785"/>
<dbReference type="KEGG" id="xcv:XCV1752"/>
<dbReference type="eggNOG" id="COG0148">
    <property type="taxonomic scope" value="Bacteria"/>
</dbReference>
<dbReference type="HOGENOM" id="CLU_031223_2_1_6"/>
<dbReference type="UniPathway" id="UPA00109">
    <property type="reaction ID" value="UER00187"/>
</dbReference>
<dbReference type="Proteomes" id="UP000007069">
    <property type="component" value="Chromosome"/>
</dbReference>
<dbReference type="GO" id="GO:0009986">
    <property type="term" value="C:cell surface"/>
    <property type="evidence" value="ECO:0007669"/>
    <property type="project" value="UniProtKB-SubCell"/>
</dbReference>
<dbReference type="GO" id="GO:0005576">
    <property type="term" value="C:extracellular region"/>
    <property type="evidence" value="ECO:0007669"/>
    <property type="project" value="UniProtKB-SubCell"/>
</dbReference>
<dbReference type="GO" id="GO:0000015">
    <property type="term" value="C:phosphopyruvate hydratase complex"/>
    <property type="evidence" value="ECO:0007669"/>
    <property type="project" value="InterPro"/>
</dbReference>
<dbReference type="GO" id="GO:0000287">
    <property type="term" value="F:magnesium ion binding"/>
    <property type="evidence" value="ECO:0007669"/>
    <property type="project" value="UniProtKB-UniRule"/>
</dbReference>
<dbReference type="GO" id="GO:0004634">
    <property type="term" value="F:phosphopyruvate hydratase activity"/>
    <property type="evidence" value="ECO:0007669"/>
    <property type="project" value="UniProtKB-UniRule"/>
</dbReference>
<dbReference type="GO" id="GO:0006096">
    <property type="term" value="P:glycolytic process"/>
    <property type="evidence" value="ECO:0007669"/>
    <property type="project" value="UniProtKB-UniRule"/>
</dbReference>
<dbReference type="CDD" id="cd03313">
    <property type="entry name" value="enolase"/>
    <property type="match status" value="1"/>
</dbReference>
<dbReference type="FunFam" id="3.20.20.120:FF:000001">
    <property type="entry name" value="Enolase"/>
    <property type="match status" value="1"/>
</dbReference>
<dbReference type="FunFam" id="3.30.390.10:FF:000001">
    <property type="entry name" value="Enolase"/>
    <property type="match status" value="1"/>
</dbReference>
<dbReference type="Gene3D" id="3.20.20.120">
    <property type="entry name" value="Enolase-like C-terminal domain"/>
    <property type="match status" value="1"/>
</dbReference>
<dbReference type="Gene3D" id="3.30.390.10">
    <property type="entry name" value="Enolase-like, N-terminal domain"/>
    <property type="match status" value="1"/>
</dbReference>
<dbReference type="HAMAP" id="MF_00318">
    <property type="entry name" value="Enolase"/>
    <property type="match status" value="1"/>
</dbReference>
<dbReference type="InterPro" id="IPR000941">
    <property type="entry name" value="Enolase"/>
</dbReference>
<dbReference type="InterPro" id="IPR036849">
    <property type="entry name" value="Enolase-like_C_sf"/>
</dbReference>
<dbReference type="InterPro" id="IPR029017">
    <property type="entry name" value="Enolase-like_N"/>
</dbReference>
<dbReference type="InterPro" id="IPR020810">
    <property type="entry name" value="Enolase_C"/>
</dbReference>
<dbReference type="InterPro" id="IPR020809">
    <property type="entry name" value="Enolase_CS"/>
</dbReference>
<dbReference type="InterPro" id="IPR020811">
    <property type="entry name" value="Enolase_N"/>
</dbReference>
<dbReference type="NCBIfam" id="TIGR01060">
    <property type="entry name" value="eno"/>
    <property type="match status" value="1"/>
</dbReference>
<dbReference type="PANTHER" id="PTHR11902">
    <property type="entry name" value="ENOLASE"/>
    <property type="match status" value="1"/>
</dbReference>
<dbReference type="PANTHER" id="PTHR11902:SF1">
    <property type="entry name" value="ENOLASE"/>
    <property type="match status" value="1"/>
</dbReference>
<dbReference type="Pfam" id="PF00113">
    <property type="entry name" value="Enolase_C"/>
    <property type="match status" value="1"/>
</dbReference>
<dbReference type="Pfam" id="PF03952">
    <property type="entry name" value="Enolase_N"/>
    <property type="match status" value="1"/>
</dbReference>
<dbReference type="PIRSF" id="PIRSF001400">
    <property type="entry name" value="Enolase"/>
    <property type="match status" value="1"/>
</dbReference>
<dbReference type="PRINTS" id="PR00148">
    <property type="entry name" value="ENOLASE"/>
</dbReference>
<dbReference type="SFLD" id="SFLDS00001">
    <property type="entry name" value="Enolase"/>
    <property type="match status" value="1"/>
</dbReference>
<dbReference type="SFLD" id="SFLDF00002">
    <property type="entry name" value="enolase"/>
    <property type="match status" value="1"/>
</dbReference>
<dbReference type="SMART" id="SM01192">
    <property type="entry name" value="Enolase_C"/>
    <property type="match status" value="1"/>
</dbReference>
<dbReference type="SMART" id="SM01193">
    <property type="entry name" value="Enolase_N"/>
    <property type="match status" value="1"/>
</dbReference>
<dbReference type="SUPFAM" id="SSF51604">
    <property type="entry name" value="Enolase C-terminal domain-like"/>
    <property type="match status" value="1"/>
</dbReference>
<dbReference type="SUPFAM" id="SSF54826">
    <property type="entry name" value="Enolase N-terminal domain-like"/>
    <property type="match status" value="1"/>
</dbReference>
<dbReference type="PROSITE" id="PS00164">
    <property type="entry name" value="ENOLASE"/>
    <property type="match status" value="1"/>
</dbReference>
<organism>
    <name type="scientific">Xanthomonas euvesicatoria pv. vesicatoria (strain 85-10)</name>
    <name type="common">Xanthomonas campestris pv. vesicatoria</name>
    <dbReference type="NCBI Taxonomy" id="316273"/>
    <lineage>
        <taxon>Bacteria</taxon>
        <taxon>Pseudomonadati</taxon>
        <taxon>Pseudomonadota</taxon>
        <taxon>Gammaproteobacteria</taxon>
        <taxon>Lysobacterales</taxon>
        <taxon>Lysobacteraceae</taxon>
        <taxon>Xanthomonas</taxon>
    </lineage>
</organism>
<gene>
    <name evidence="1" type="primary">eno</name>
    <name type="ordered locus">XCV1752</name>
</gene>
<comment type="function">
    <text evidence="1">Catalyzes the reversible conversion of 2-phosphoglycerate (2-PG) into phosphoenolpyruvate (PEP). It is essential for the degradation of carbohydrates via glycolysis.</text>
</comment>
<comment type="catalytic activity">
    <reaction evidence="1">
        <text>(2R)-2-phosphoglycerate = phosphoenolpyruvate + H2O</text>
        <dbReference type="Rhea" id="RHEA:10164"/>
        <dbReference type="ChEBI" id="CHEBI:15377"/>
        <dbReference type="ChEBI" id="CHEBI:58289"/>
        <dbReference type="ChEBI" id="CHEBI:58702"/>
        <dbReference type="EC" id="4.2.1.11"/>
    </reaction>
</comment>
<comment type="cofactor">
    <cofactor evidence="1">
        <name>Mg(2+)</name>
        <dbReference type="ChEBI" id="CHEBI:18420"/>
    </cofactor>
    <text evidence="1">Binds a second Mg(2+) ion via substrate during catalysis.</text>
</comment>
<comment type="pathway">
    <text evidence="1">Carbohydrate degradation; glycolysis; pyruvate from D-glyceraldehyde 3-phosphate: step 4/5.</text>
</comment>
<comment type="subunit">
    <text evidence="1">Component of the RNA degradosome, a multiprotein complex involved in RNA processing and mRNA degradation.</text>
</comment>
<comment type="subcellular location">
    <subcellularLocation>
        <location evidence="1">Cytoplasm</location>
    </subcellularLocation>
    <subcellularLocation>
        <location evidence="1">Secreted</location>
    </subcellularLocation>
    <subcellularLocation>
        <location evidence="1">Cell surface</location>
    </subcellularLocation>
    <text evidence="1">Fractions of enolase are present in both the cytoplasm and on the cell surface.</text>
</comment>
<comment type="similarity">
    <text evidence="1">Belongs to the enolase family.</text>
</comment>
<protein>
    <recommendedName>
        <fullName evidence="1">Enolase</fullName>
        <ecNumber evidence="1">4.2.1.11</ecNumber>
    </recommendedName>
    <alternativeName>
        <fullName evidence="1">2-phospho-D-glycerate hydro-lyase</fullName>
    </alternativeName>
    <alternativeName>
        <fullName evidence="1">2-phosphoglycerate dehydratase</fullName>
    </alternativeName>
</protein>
<proteinExistence type="inferred from homology"/>
<keyword id="KW-0963">Cytoplasm</keyword>
<keyword id="KW-0324">Glycolysis</keyword>
<keyword id="KW-0456">Lyase</keyword>
<keyword id="KW-0460">Magnesium</keyword>
<keyword id="KW-0479">Metal-binding</keyword>
<keyword id="KW-0964">Secreted</keyword>